<sequence length="9" mass="1091">DLDVNVFNR</sequence>
<feature type="chain" id="PRO_0000326462" description="Pathogenesis-related protein">
    <location>
        <begin position="1" status="less than"/>
        <end position="9" status="greater than"/>
    </location>
</feature>
<feature type="domain" description="Barwin" evidence="1">
    <location>
        <begin position="1" status="less than"/>
        <end position="9" status="greater than"/>
    </location>
</feature>
<feature type="unsure residue" description="L or I" evidence="2">
    <location>
        <position position="2"/>
    </location>
</feature>
<feature type="unsure residue" description="F or M" evidence="2">
    <location>
        <position position="7"/>
    </location>
</feature>
<feature type="non-terminal residue" evidence="3">
    <location>
        <position position="1"/>
    </location>
</feature>
<feature type="non-terminal residue" evidence="3">
    <location>
        <position position="9"/>
    </location>
</feature>
<comment type="subcellular location">
    <subcellularLocation>
        <location evidence="2">Secreted</location>
        <location evidence="2">Cell wall</location>
    </subcellularLocation>
</comment>
<reference evidence="4" key="1">
    <citation type="journal article" date="2009" name="J. Plant Physiol.">
        <title>Analysis of the soluble cell wall proteome of gymnosperms.</title>
        <authorList>
            <person name="Uzal E.N."/>
            <person name="Gomez-Ros L.V."/>
            <person name="Hernandez J.A."/>
            <person name="Pedreno M.A."/>
            <person name="Cuello J."/>
            <person name="Ros Barcelo A."/>
        </authorList>
    </citation>
    <scope>PROTEIN SEQUENCE</scope>
    <scope>SUBCELLULAR LOCATION</scope>
    <source>
        <strain evidence="2">PC-61</strain>
        <tissue evidence="2">Callus</tissue>
    </source>
</reference>
<keyword id="KW-0134">Cell wall</keyword>
<keyword id="KW-0903">Direct protein sequencing</keyword>
<keyword id="KW-0568">Pathogenesis-related protein</keyword>
<keyword id="KW-0611">Plant defense</keyword>
<keyword id="KW-0964">Secreted</keyword>
<dbReference type="GO" id="GO:0005576">
    <property type="term" value="C:extracellular region"/>
    <property type="evidence" value="ECO:0007669"/>
    <property type="project" value="UniProtKB-KW"/>
</dbReference>
<dbReference type="GO" id="GO:0006952">
    <property type="term" value="P:defense response"/>
    <property type="evidence" value="ECO:0007669"/>
    <property type="project" value="UniProtKB-KW"/>
</dbReference>
<name>PRP_EPHDI</name>
<evidence type="ECO:0000255" key="1">
    <source>
        <dbReference type="PROSITE-ProRule" id="PRU00527"/>
    </source>
</evidence>
<evidence type="ECO:0000269" key="2">
    <source>
    </source>
</evidence>
<evidence type="ECO:0000303" key="3">
    <source>
    </source>
</evidence>
<evidence type="ECO:0000305" key="4"/>
<proteinExistence type="evidence at protein level"/>
<organism>
    <name type="scientific">Ephedra distachya</name>
    <name type="common">Joint-fir</name>
    <name type="synonym">Ephedra vulgaris</name>
    <dbReference type="NCBI Taxonomy" id="3389"/>
    <lineage>
        <taxon>Eukaryota</taxon>
        <taxon>Viridiplantae</taxon>
        <taxon>Streptophyta</taxon>
        <taxon>Embryophyta</taxon>
        <taxon>Tracheophyta</taxon>
        <taxon>Spermatophyta</taxon>
        <taxon>Gnetopsida</taxon>
        <taxon>Gnetidae</taxon>
        <taxon>Ephedrales</taxon>
        <taxon>Ephedraceae</taxon>
        <taxon>Ephedra</taxon>
    </lineage>
</organism>
<protein>
    <recommendedName>
        <fullName>Pathogenesis-related protein</fullName>
    </recommendedName>
</protein>
<accession>P85494</accession>